<reference key="1">
    <citation type="journal article" date="2005" name="J. Bacteriol.">
        <title>Swine and poultry pathogens: the complete genome sequences of two strains of Mycoplasma hyopneumoniae and a strain of Mycoplasma synoviae.</title>
        <authorList>
            <person name="Vasconcelos A.T.R."/>
            <person name="Ferreira H.B."/>
            <person name="Bizarro C.V."/>
            <person name="Bonatto S.L."/>
            <person name="Carvalho M.O."/>
            <person name="Pinto P.M."/>
            <person name="Almeida D.F."/>
            <person name="Almeida L.G.P."/>
            <person name="Almeida R."/>
            <person name="Alves-Junior L."/>
            <person name="Assuncao E.N."/>
            <person name="Azevedo V.A.C."/>
            <person name="Bogo M.R."/>
            <person name="Brigido M.M."/>
            <person name="Brocchi M."/>
            <person name="Burity H.A."/>
            <person name="Camargo A.A."/>
            <person name="Camargo S.S."/>
            <person name="Carepo M.S."/>
            <person name="Carraro D.M."/>
            <person name="de Mattos Cascardo J.C."/>
            <person name="Castro L.A."/>
            <person name="Cavalcanti G."/>
            <person name="Chemale G."/>
            <person name="Collevatti R.G."/>
            <person name="Cunha C.W."/>
            <person name="Dallagiovanna B."/>
            <person name="Dambros B.P."/>
            <person name="Dellagostin O.A."/>
            <person name="Falcao C."/>
            <person name="Fantinatti-Garboggini F."/>
            <person name="Felipe M.S.S."/>
            <person name="Fiorentin L."/>
            <person name="Franco G.R."/>
            <person name="Freitas N.S.A."/>
            <person name="Frias D."/>
            <person name="Grangeiro T.B."/>
            <person name="Grisard E.C."/>
            <person name="Guimaraes C.T."/>
            <person name="Hungria M."/>
            <person name="Jardim S.N."/>
            <person name="Krieger M.A."/>
            <person name="Laurino J.P."/>
            <person name="Lima L.F.A."/>
            <person name="Lopes M.I."/>
            <person name="Loreto E.L.S."/>
            <person name="Madeira H.M.F."/>
            <person name="Manfio G.P."/>
            <person name="Maranhao A.Q."/>
            <person name="Martinkovics C.T."/>
            <person name="Medeiros S.R.B."/>
            <person name="Moreira M.A.M."/>
            <person name="Neiva M."/>
            <person name="Ramalho-Neto C.E."/>
            <person name="Nicolas M.F."/>
            <person name="Oliveira S.C."/>
            <person name="Paixao R.F.C."/>
            <person name="Pedrosa F.O."/>
            <person name="Pena S.D.J."/>
            <person name="Pereira M."/>
            <person name="Pereira-Ferrari L."/>
            <person name="Piffer I."/>
            <person name="Pinto L.S."/>
            <person name="Potrich D.P."/>
            <person name="Salim A.C.M."/>
            <person name="Santos F.R."/>
            <person name="Schmitt R."/>
            <person name="Schneider M.P.C."/>
            <person name="Schrank A."/>
            <person name="Schrank I.S."/>
            <person name="Schuck A.F."/>
            <person name="Seuanez H.N."/>
            <person name="Silva D.W."/>
            <person name="Silva R."/>
            <person name="Silva S.C."/>
            <person name="Soares C.M.A."/>
            <person name="Souza K.R.L."/>
            <person name="Souza R.C."/>
            <person name="Staats C.C."/>
            <person name="Steffens M.B.R."/>
            <person name="Teixeira S.M.R."/>
            <person name="Urmenyi T.P."/>
            <person name="Vainstein M.H."/>
            <person name="Zuccherato L.W."/>
            <person name="Simpson A.J.G."/>
            <person name="Zaha A."/>
        </authorList>
    </citation>
    <scope>NUCLEOTIDE SEQUENCE [LARGE SCALE GENOMIC DNA]</scope>
    <source>
        <strain>7448</strain>
    </source>
</reference>
<organism>
    <name type="scientific">Mesomycoplasma hyopneumoniae (strain 7448)</name>
    <name type="common">Mycoplasma hyopneumoniae</name>
    <dbReference type="NCBI Taxonomy" id="262722"/>
    <lineage>
        <taxon>Bacteria</taxon>
        <taxon>Bacillati</taxon>
        <taxon>Mycoplasmatota</taxon>
        <taxon>Mycoplasmoidales</taxon>
        <taxon>Metamycoplasmataceae</taxon>
        <taxon>Mesomycoplasma</taxon>
    </lineage>
</organism>
<gene>
    <name evidence="1" type="primary">iolE</name>
    <name type="ordered locus">MHP7448_0230</name>
</gene>
<accession>Q4A8D5</accession>
<keyword id="KW-0170">Cobalt</keyword>
<keyword id="KW-0456">Lyase</keyword>
<keyword id="KW-0464">Manganese</keyword>
<comment type="function">
    <text evidence="1">Catalyzes the dehydration of inosose (2-keto-myo-inositol, 2KMI or 2,4,6/3,5-pentahydroxycyclohexanone) to 3D-(3,5/4)-trihydroxycyclohexane-1,2-dione (D-2,3-diketo-4-deoxy-epi-inositol).</text>
</comment>
<comment type="catalytic activity">
    <reaction evidence="1">
        <text>scyllo-inosose = 3D-3,5/4-trihydroxycyclohexane-1,2-dione + H2O</text>
        <dbReference type="Rhea" id="RHEA:14065"/>
        <dbReference type="ChEBI" id="CHEBI:15377"/>
        <dbReference type="ChEBI" id="CHEBI:17811"/>
        <dbReference type="ChEBI" id="CHEBI:28446"/>
        <dbReference type="EC" id="4.2.1.44"/>
    </reaction>
</comment>
<comment type="cofactor">
    <cofactor evidence="1">
        <name>glutathione</name>
        <dbReference type="ChEBI" id="CHEBI:57925"/>
    </cofactor>
</comment>
<comment type="cofactor">
    <cofactor evidence="1">
        <name>Co(2+)</name>
        <dbReference type="ChEBI" id="CHEBI:48828"/>
    </cofactor>
    <cofactor evidence="1">
        <name>Mn(2+)</name>
        <dbReference type="ChEBI" id="CHEBI:29035"/>
    </cofactor>
</comment>
<comment type="similarity">
    <text evidence="1">Belongs to the IolE/MocC family.</text>
</comment>
<feature type="chain" id="PRO_0000352376" description="Inosose dehydratase">
    <location>
        <begin position="1"/>
        <end position="300"/>
    </location>
</feature>
<dbReference type="EC" id="4.2.1.44" evidence="1"/>
<dbReference type="EMBL" id="AE017244">
    <property type="protein sequence ID" value="AAZ53604.2"/>
    <property type="molecule type" value="Genomic_DNA"/>
</dbReference>
<dbReference type="RefSeq" id="WP_011205986.1">
    <property type="nucleotide sequence ID" value="NC_007332.1"/>
</dbReference>
<dbReference type="SMR" id="Q4A8D5"/>
<dbReference type="KEGG" id="mhp:MHP7448_0230"/>
<dbReference type="HOGENOM" id="CLU_059523_0_0_14"/>
<dbReference type="Proteomes" id="UP000000553">
    <property type="component" value="Chromosome"/>
</dbReference>
<dbReference type="GO" id="GO:0030145">
    <property type="term" value="F:manganese ion binding"/>
    <property type="evidence" value="ECO:0007669"/>
    <property type="project" value="UniProtKB-UniRule"/>
</dbReference>
<dbReference type="GO" id="GO:0050114">
    <property type="term" value="F:myo-inosose-2 dehydratase activity"/>
    <property type="evidence" value="ECO:0007669"/>
    <property type="project" value="UniProtKB-UniRule"/>
</dbReference>
<dbReference type="GO" id="GO:0019310">
    <property type="term" value="P:inositol catabolic process"/>
    <property type="evidence" value="ECO:0007669"/>
    <property type="project" value="UniProtKB-UniRule"/>
</dbReference>
<dbReference type="Gene3D" id="3.20.20.150">
    <property type="entry name" value="Divalent-metal-dependent TIM barrel enzymes"/>
    <property type="match status" value="1"/>
</dbReference>
<dbReference type="HAMAP" id="MF_01672">
    <property type="entry name" value="IolE"/>
    <property type="match status" value="1"/>
</dbReference>
<dbReference type="InterPro" id="IPR023952">
    <property type="entry name" value="IolE"/>
</dbReference>
<dbReference type="InterPro" id="IPR030823">
    <property type="entry name" value="IolE/MocC"/>
</dbReference>
<dbReference type="InterPro" id="IPR050312">
    <property type="entry name" value="IolE/XylAMocC-like"/>
</dbReference>
<dbReference type="InterPro" id="IPR036237">
    <property type="entry name" value="Xyl_isomerase-like_sf"/>
</dbReference>
<dbReference type="InterPro" id="IPR013022">
    <property type="entry name" value="Xyl_isomerase-like_TIM-brl"/>
</dbReference>
<dbReference type="NCBIfam" id="TIGR04379">
    <property type="entry name" value="myo_inos_iolE"/>
    <property type="match status" value="1"/>
</dbReference>
<dbReference type="PANTHER" id="PTHR12110">
    <property type="entry name" value="HYDROXYPYRUVATE ISOMERASE"/>
    <property type="match status" value="1"/>
</dbReference>
<dbReference type="PANTHER" id="PTHR12110:SF41">
    <property type="entry name" value="INOSOSE DEHYDRATASE"/>
    <property type="match status" value="1"/>
</dbReference>
<dbReference type="Pfam" id="PF01261">
    <property type="entry name" value="AP_endonuc_2"/>
    <property type="match status" value="1"/>
</dbReference>
<dbReference type="SUPFAM" id="SSF51658">
    <property type="entry name" value="Xylose isomerase-like"/>
    <property type="match status" value="1"/>
</dbReference>
<name>IOLE_MESH7</name>
<evidence type="ECO:0000255" key="1">
    <source>
        <dbReference type="HAMAP-Rule" id="MF_01672"/>
    </source>
</evidence>
<sequence>MNKIWKLKNVKVGVAPILWTNDDMPELGGDISFDRAISEMAQAGYQGTEIGNKFPKDAKILLRELKKYNLEIASAWFSGYIISDFEKNFQDFQKHCLFLKALGAKVVVFSEQTYSIQGQNKPLFKDKPYFTNQEFENLAQGLNKFGKWSKQHGIELVYHHHMGTGIQSLKETEKILELTDPEFVSLIFDTGHFAHAGEDIVFCLKRLISRIRHIHLKDIRKEKINELKAKNLSFLEGVKQGIFTVPGDGDIQNYPLFFELLAKNNYQGWLIVEAEQDPRKANPLEYAKKAMDYLRSLISW</sequence>
<proteinExistence type="inferred from homology"/>
<protein>
    <recommendedName>
        <fullName evidence="1">Inosose dehydratase</fullName>
        <ecNumber evidence="1">4.2.1.44</ecNumber>
    </recommendedName>
    <alternativeName>
        <fullName evidence="1">2-keto-myo-inositol dehydratase</fullName>
        <shortName evidence="1">2KMI dehydratase</shortName>
    </alternativeName>
</protein>